<feature type="chain" id="PRO_0000303851" description="Xaa-Pro dipeptidase">
    <location>
        <begin position="1"/>
        <end position="443"/>
    </location>
</feature>
<feature type="binding site" evidence="1">
    <location>
        <position position="244"/>
    </location>
    <ligand>
        <name>Mn(2+)</name>
        <dbReference type="ChEBI" id="CHEBI:29035"/>
        <label>2</label>
    </ligand>
</feature>
<feature type="binding site" evidence="1">
    <location>
        <position position="255"/>
    </location>
    <ligand>
        <name>Mn(2+)</name>
        <dbReference type="ChEBI" id="CHEBI:29035"/>
        <label>1</label>
    </ligand>
</feature>
<feature type="binding site" evidence="1">
    <location>
        <position position="255"/>
    </location>
    <ligand>
        <name>Mn(2+)</name>
        <dbReference type="ChEBI" id="CHEBI:29035"/>
        <label>2</label>
    </ligand>
</feature>
<feature type="binding site" evidence="1">
    <location>
        <position position="339"/>
    </location>
    <ligand>
        <name>Mn(2+)</name>
        <dbReference type="ChEBI" id="CHEBI:29035"/>
        <label>1</label>
    </ligand>
</feature>
<feature type="binding site" evidence="1">
    <location>
        <position position="384"/>
    </location>
    <ligand>
        <name>Mn(2+)</name>
        <dbReference type="ChEBI" id="CHEBI:29035"/>
        <label>1</label>
    </ligand>
</feature>
<feature type="binding site" evidence="1">
    <location>
        <position position="423"/>
    </location>
    <ligand>
        <name>Mn(2+)</name>
        <dbReference type="ChEBI" id="CHEBI:29035"/>
        <label>1</label>
    </ligand>
</feature>
<feature type="binding site" evidence="1">
    <location>
        <position position="423"/>
    </location>
    <ligand>
        <name>Mn(2+)</name>
        <dbReference type="ChEBI" id="CHEBI:29035"/>
        <label>2</label>
    </ligand>
</feature>
<protein>
    <recommendedName>
        <fullName evidence="1">Xaa-Pro dipeptidase</fullName>
        <shortName evidence="1">X-Pro dipeptidase</shortName>
        <ecNumber evidence="1">3.4.13.9</ecNumber>
    </recommendedName>
    <alternativeName>
        <fullName evidence="1">Imidodipeptidase</fullName>
    </alternativeName>
    <alternativeName>
        <fullName evidence="1">Proline dipeptidase</fullName>
        <shortName evidence="1">Prolidase</shortName>
    </alternativeName>
</protein>
<reference key="1">
    <citation type="submission" date="2006-06" db="EMBL/GenBank/DDBJ databases">
        <title>Complete sequence of Pseudoalteromonas atlantica T6c.</title>
        <authorList>
            <consortium name="US DOE Joint Genome Institute"/>
            <person name="Copeland A."/>
            <person name="Lucas S."/>
            <person name="Lapidus A."/>
            <person name="Barry K."/>
            <person name="Detter J.C."/>
            <person name="Glavina del Rio T."/>
            <person name="Hammon N."/>
            <person name="Israni S."/>
            <person name="Dalin E."/>
            <person name="Tice H."/>
            <person name="Pitluck S."/>
            <person name="Saunders E."/>
            <person name="Brettin T."/>
            <person name="Bruce D."/>
            <person name="Han C."/>
            <person name="Tapia R."/>
            <person name="Gilna P."/>
            <person name="Schmutz J."/>
            <person name="Larimer F."/>
            <person name="Land M."/>
            <person name="Hauser L."/>
            <person name="Kyrpides N."/>
            <person name="Kim E."/>
            <person name="Karls A.C."/>
            <person name="Bartlett D."/>
            <person name="Higgins B.P."/>
            <person name="Richardson P."/>
        </authorList>
    </citation>
    <scope>NUCLEOTIDE SEQUENCE [LARGE SCALE GENOMIC DNA]</scope>
    <source>
        <strain>T6c / ATCC BAA-1087</strain>
    </source>
</reference>
<organism>
    <name type="scientific">Pseudoalteromonas atlantica (strain T6c / ATCC BAA-1087)</name>
    <dbReference type="NCBI Taxonomy" id="3042615"/>
    <lineage>
        <taxon>Bacteria</taxon>
        <taxon>Pseudomonadati</taxon>
        <taxon>Pseudomonadota</taxon>
        <taxon>Gammaproteobacteria</taxon>
        <taxon>Alteromonadales</taxon>
        <taxon>Alteromonadaceae</taxon>
        <taxon>Paraglaciecola</taxon>
    </lineage>
</organism>
<dbReference type="EC" id="3.4.13.9" evidence="1"/>
<dbReference type="EMBL" id="CP000388">
    <property type="protein sequence ID" value="ABG38731.1"/>
    <property type="molecule type" value="Genomic_DNA"/>
</dbReference>
<dbReference type="RefSeq" id="WP_011573135.1">
    <property type="nucleotide sequence ID" value="NC_008228.1"/>
</dbReference>
<dbReference type="SMR" id="Q15ZF7"/>
<dbReference type="STRING" id="342610.Patl_0199"/>
<dbReference type="MEROPS" id="M24.003"/>
<dbReference type="KEGG" id="pat:Patl_0199"/>
<dbReference type="eggNOG" id="COG0006">
    <property type="taxonomic scope" value="Bacteria"/>
</dbReference>
<dbReference type="HOGENOM" id="CLU_050675_0_0_6"/>
<dbReference type="OrthoDB" id="9806388at2"/>
<dbReference type="Proteomes" id="UP000001981">
    <property type="component" value="Chromosome"/>
</dbReference>
<dbReference type="GO" id="GO:0005829">
    <property type="term" value="C:cytosol"/>
    <property type="evidence" value="ECO:0007669"/>
    <property type="project" value="TreeGrafter"/>
</dbReference>
<dbReference type="GO" id="GO:0004177">
    <property type="term" value="F:aminopeptidase activity"/>
    <property type="evidence" value="ECO:0007669"/>
    <property type="project" value="TreeGrafter"/>
</dbReference>
<dbReference type="GO" id="GO:0046872">
    <property type="term" value="F:metal ion binding"/>
    <property type="evidence" value="ECO:0007669"/>
    <property type="project" value="UniProtKB-KW"/>
</dbReference>
<dbReference type="GO" id="GO:0008235">
    <property type="term" value="F:metalloexopeptidase activity"/>
    <property type="evidence" value="ECO:0007669"/>
    <property type="project" value="UniProtKB-UniRule"/>
</dbReference>
<dbReference type="GO" id="GO:0016795">
    <property type="term" value="F:phosphoric triester hydrolase activity"/>
    <property type="evidence" value="ECO:0007669"/>
    <property type="project" value="InterPro"/>
</dbReference>
<dbReference type="GO" id="GO:0102009">
    <property type="term" value="F:proline dipeptidase activity"/>
    <property type="evidence" value="ECO:0007669"/>
    <property type="project" value="UniProtKB-EC"/>
</dbReference>
<dbReference type="GO" id="GO:0006508">
    <property type="term" value="P:proteolysis"/>
    <property type="evidence" value="ECO:0007669"/>
    <property type="project" value="UniProtKB-KW"/>
</dbReference>
<dbReference type="Gene3D" id="3.90.230.10">
    <property type="entry name" value="Creatinase/methionine aminopeptidase superfamily"/>
    <property type="match status" value="1"/>
</dbReference>
<dbReference type="Gene3D" id="3.40.350.10">
    <property type="entry name" value="Creatinase/prolidase N-terminal domain"/>
    <property type="match status" value="1"/>
</dbReference>
<dbReference type="HAMAP" id="MF_01279">
    <property type="entry name" value="X_Pro_dipeptid"/>
    <property type="match status" value="1"/>
</dbReference>
<dbReference type="InterPro" id="IPR029149">
    <property type="entry name" value="Creatin/AminoP/Spt16_N"/>
</dbReference>
<dbReference type="InterPro" id="IPR036005">
    <property type="entry name" value="Creatinase/aminopeptidase-like"/>
</dbReference>
<dbReference type="InterPro" id="IPR048819">
    <property type="entry name" value="PepQ_N"/>
</dbReference>
<dbReference type="InterPro" id="IPR000994">
    <property type="entry name" value="Pept_M24"/>
</dbReference>
<dbReference type="InterPro" id="IPR001131">
    <property type="entry name" value="Peptidase_M24B_aminopep-P_CS"/>
</dbReference>
<dbReference type="InterPro" id="IPR052433">
    <property type="entry name" value="X-Pro_dipept-like"/>
</dbReference>
<dbReference type="InterPro" id="IPR022846">
    <property type="entry name" value="X_Pro_dipept"/>
</dbReference>
<dbReference type="NCBIfam" id="NF010133">
    <property type="entry name" value="PRK13607.1"/>
    <property type="match status" value="1"/>
</dbReference>
<dbReference type="PANTHER" id="PTHR43226">
    <property type="entry name" value="XAA-PRO AMINOPEPTIDASE 3"/>
    <property type="match status" value="1"/>
</dbReference>
<dbReference type="PANTHER" id="PTHR43226:SF8">
    <property type="entry name" value="XAA-PRO DIPEPTIDASE"/>
    <property type="match status" value="1"/>
</dbReference>
<dbReference type="Pfam" id="PF21216">
    <property type="entry name" value="PepQ_N"/>
    <property type="match status" value="1"/>
</dbReference>
<dbReference type="Pfam" id="PF00557">
    <property type="entry name" value="Peptidase_M24"/>
    <property type="match status" value="1"/>
</dbReference>
<dbReference type="SUPFAM" id="SSF55920">
    <property type="entry name" value="Creatinase/aminopeptidase"/>
    <property type="match status" value="1"/>
</dbReference>
<dbReference type="PROSITE" id="PS00491">
    <property type="entry name" value="PROLINE_PEPTIDASE"/>
    <property type="match status" value="1"/>
</dbReference>
<gene>
    <name evidence="1" type="primary">pepQ</name>
    <name type="ordered locus">Patl_0199</name>
</gene>
<accession>Q15ZF7</accession>
<comment type="function">
    <text evidence="1">Splits dipeptides with a prolyl residue in the C-terminal position.</text>
</comment>
<comment type="catalytic activity">
    <reaction evidence="1">
        <text>Xaa-L-Pro dipeptide + H2O = an L-alpha-amino acid + L-proline</text>
        <dbReference type="Rhea" id="RHEA:76407"/>
        <dbReference type="ChEBI" id="CHEBI:15377"/>
        <dbReference type="ChEBI" id="CHEBI:59869"/>
        <dbReference type="ChEBI" id="CHEBI:60039"/>
        <dbReference type="ChEBI" id="CHEBI:195196"/>
        <dbReference type="EC" id="3.4.13.9"/>
    </reaction>
</comment>
<comment type="cofactor">
    <cofactor evidence="1">
        <name>Mn(2+)</name>
        <dbReference type="ChEBI" id="CHEBI:29035"/>
    </cofactor>
    <text evidence="1">Binds 2 manganese ions per subunit.</text>
</comment>
<comment type="similarity">
    <text evidence="1">Belongs to the peptidase M24B family. Bacterial-type prolidase subfamily.</text>
</comment>
<name>PEPQ_PSEA6</name>
<proteinExistence type="inferred from homology"/>
<keyword id="KW-0224">Dipeptidase</keyword>
<keyword id="KW-0378">Hydrolase</keyword>
<keyword id="KW-0464">Manganese</keyword>
<keyword id="KW-0479">Metal-binding</keyword>
<keyword id="KW-0482">Metalloprotease</keyword>
<keyword id="KW-0645">Protease</keyword>
<sequence>MQQLAELYPQHISELQSRTKEALSREGIDGLIIHSGQAKRMFLDDNNYPFKCNPQFKAWLPVIDNPNCWLIVNGSDKPKLIFYRPKDFWHKVPPEPNDFWVEQFDVVLLTQADAVEKHLPYDRSRFAYIGEYIEVAKALGFDLVNPDRVLNYLHYQRAYKTDYELVCMRQANALAVAGHNAAAAAFKAGKSEFDINQAYLAAVRQSDNQVPYNNIVALNENSAILHYMEQDVVAPSESRSFLIDAGASFHGYAADITRTYCNGSIPNSSHFAELINGMHQVTLSLADSLKPGVPYSDIHIAAHAQVAQLLHQFDIVNLSPDDILAEQIVSTFFPHGIGHFLGLQVHDVAGHVADDRGTPNPPPAEHPFLRTTRMIEARQVFTIEPGLYFIDSLLADLKSTEKSKFINWDVVDTFRPFGGIRIEDNIIVHRDKNENMTRDLGLN</sequence>
<evidence type="ECO:0000255" key="1">
    <source>
        <dbReference type="HAMAP-Rule" id="MF_01279"/>
    </source>
</evidence>